<keyword id="KW-0002">3D-structure</keyword>
<keyword id="KW-0903">Direct protein sequencing</keyword>
<keyword id="KW-0378">Hydrolase</keyword>
<keyword id="KW-0614">Plasmid</keyword>
<keyword id="KW-0645">Protease</keyword>
<keyword id="KW-1185">Reference proteome</keyword>
<keyword id="KW-0964">Secreted</keyword>
<keyword id="KW-0788">Thiol protease</keyword>
<keyword id="KW-0843">Virulence</keyword>
<comment type="function">
    <text evidence="3 6 7">Alpha-tubulin-specific protease that is required for entry into epithelial cells and for subsequent intra- and intercellular spreading. Contributes to bacterial entry into epithelial cells by inducing microtubule (MT) destabilization and the formation of membrane ruffles. The membrane ruffling evoked by VirA results from the activation of host rac1, which is associated with the destruction of MT networks. Creates a tunnel inside the host cell cytoplasm by breaking down the microtubule infrastructure. This facilitates the bacterium's movement through the cytoplasm and also helps other bacteria move faster during the invasion of the eukaryotic cell. Is absolutely required for virulence.</text>
</comment>
<comment type="activity regulation">
    <text evidence="6">Inhibited by the cysteine protease inhibitors leupeptin and cystatin-C.</text>
</comment>
<comment type="subunit">
    <text evidence="3">Monomer. Interacts specifically with alpha tubulin, a major component of microtubule.</text>
</comment>
<comment type="subcellular location">
    <subcellularLocation>
        <location evidence="2 7">Secreted</location>
    </subcellularLocation>
    <text>Translocated into the host cell via the type III secretion system (T3SS). Localizes in the cytoplasm of the infected cell.</text>
</comment>
<comment type="induction">
    <text evidence="4 5 8">Transcriptionally activated by VirB and MxiE, in association with IpgC, upon invasion of the eukaryotic cell. Induced at 37 degrees Celsius.</text>
</comment>
<comment type="similarity">
    <text evidence="9">Belongs to the protease EspG/VirA family.</text>
</comment>
<organism>
    <name type="scientific">Shigella flexneri</name>
    <dbReference type="NCBI Taxonomy" id="623"/>
    <lineage>
        <taxon>Bacteria</taxon>
        <taxon>Pseudomonadati</taxon>
        <taxon>Pseudomonadota</taxon>
        <taxon>Gammaproteobacteria</taxon>
        <taxon>Enterobacterales</taxon>
        <taxon>Enterobacteriaceae</taxon>
        <taxon>Shigella</taxon>
    </lineage>
</organism>
<dbReference type="EC" id="3.4.22.-"/>
<dbReference type="EMBL" id="D26468">
    <property type="protein sequence ID" value="BAA05480.1"/>
    <property type="molecule type" value="Genomic_DNA"/>
</dbReference>
<dbReference type="EMBL" id="AF047364">
    <property type="protein sequence ID" value="AAC23713.1"/>
    <property type="molecule type" value="Genomic_DNA"/>
</dbReference>
<dbReference type="EMBL" id="AL391753">
    <property type="protein sequence ID" value="CAC05836.1"/>
    <property type="molecule type" value="Genomic_DNA"/>
</dbReference>
<dbReference type="EMBL" id="AF348706">
    <property type="protein sequence ID" value="AAK18501.1"/>
    <property type="molecule type" value="Genomic_DNA"/>
</dbReference>
<dbReference type="EMBL" id="AY206441">
    <property type="protein sequence ID" value="AAP79023.1"/>
    <property type="molecule type" value="Genomic_DNA"/>
</dbReference>
<dbReference type="EMBL" id="AF386526">
    <property type="protein sequence ID" value="AAL72296.2"/>
    <property type="molecule type" value="Genomic_DNA"/>
</dbReference>
<dbReference type="PIR" id="S70187">
    <property type="entry name" value="S70187"/>
</dbReference>
<dbReference type="RefSeq" id="NP_085345.1">
    <property type="nucleotide sequence ID" value="NC_002698.1"/>
</dbReference>
<dbReference type="RefSeq" id="NP_858314.2">
    <property type="nucleotide sequence ID" value="NC_004851.1"/>
</dbReference>
<dbReference type="RefSeq" id="WP_001195004.1">
    <property type="nucleotide sequence ID" value="NZ_WPGT01000147.1"/>
</dbReference>
<dbReference type="RefSeq" id="YP_009062518.1">
    <property type="nucleotide sequence ID" value="NC_024996.1"/>
</dbReference>
<dbReference type="PDB" id="3EB8">
    <property type="method" value="X-ray"/>
    <property type="resolution" value="2.40 A"/>
    <property type="chains" value="A/B=45-400"/>
</dbReference>
<dbReference type="PDB" id="3EE1">
    <property type="method" value="X-ray"/>
    <property type="resolution" value="3.01 A"/>
    <property type="chains" value="A/B=14-400"/>
</dbReference>
<dbReference type="PDB" id="4FMB">
    <property type="method" value="X-ray"/>
    <property type="resolution" value="3.20 A"/>
    <property type="chains" value="A/C/E=45-400"/>
</dbReference>
<dbReference type="PDBsum" id="3EB8"/>
<dbReference type="PDBsum" id="3EE1"/>
<dbReference type="PDBsum" id="4FMB"/>
<dbReference type="SMR" id="Q7BU69"/>
<dbReference type="IntAct" id="Q7BU69">
    <property type="interactions" value="2"/>
</dbReference>
<dbReference type="PaxDb" id="198214-CP0181"/>
<dbReference type="GeneID" id="1237992"/>
<dbReference type="KEGG" id="sfl:CP0181"/>
<dbReference type="PATRIC" id="fig|198214.7.peg.5432"/>
<dbReference type="HOGENOM" id="CLU_688663_0_0_6"/>
<dbReference type="EvolutionaryTrace" id="Q7BU69"/>
<dbReference type="PHI-base" id="PHI:9252"/>
<dbReference type="Proteomes" id="UP000001006">
    <property type="component" value="Plasmid pCP301"/>
</dbReference>
<dbReference type="GO" id="GO:0005576">
    <property type="term" value="C:extracellular region"/>
    <property type="evidence" value="ECO:0007669"/>
    <property type="project" value="UniProtKB-SubCell"/>
</dbReference>
<dbReference type="GO" id="GO:0004197">
    <property type="term" value="F:cysteine-type endopeptidase activity"/>
    <property type="evidence" value="ECO:0007669"/>
    <property type="project" value="InterPro"/>
</dbReference>
<dbReference type="GO" id="GO:0006508">
    <property type="term" value="P:proteolysis"/>
    <property type="evidence" value="ECO:0007669"/>
    <property type="project" value="UniProtKB-KW"/>
</dbReference>
<dbReference type="Gene3D" id="3.10.450.460">
    <property type="entry name" value="EspG protein, N-terminal domain"/>
    <property type="match status" value="1"/>
</dbReference>
<dbReference type="InterPro" id="IPR009669">
    <property type="entry name" value="Cys_protease_VirA/EspG"/>
</dbReference>
<dbReference type="InterPro" id="IPR043098">
    <property type="entry name" value="Cys_protease_VirA/EspG_N"/>
</dbReference>
<dbReference type="Pfam" id="PF06872">
    <property type="entry name" value="EspG"/>
    <property type="match status" value="1"/>
</dbReference>
<dbReference type="PIRSF" id="PIRSF011515">
    <property type="entry name" value="EspG"/>
    <property type="match status" value="1"/>
</dbReference>
<accession>Q7BU69</accession>
<accession>Q52295</accession>
<accession>Q6XVV7</accession>
<accession>Q7BEL1</accession>
<accession>Q8VSF1</accession>
<proteinExistence type="evidence at protein level"/>
<reference key="1">
    <citation type="journal article" date="1995" name="Mol. Microbiol.">
        <title>Identification of a novel virulence gene, virA, on the large plasmid of Shigella, involved in invasion and intercellular spreading.</title>
        <authorList>
            <person name="Uchiya K."/>
            <person name="Tobe T."/>
            <person name="Komatsu K."/>
            <person name="Suzuki T."/>
            <person name="Watarai M."/>
            <person name="Fukuda I."/>
            <person name="Yoshikawa M."/>
            <person name="Sasakawa C."/>
        </authorList>
    </citation>
    <scope>NUCLEOTIDE SEQUENCE [GENOMIC DNA]</scope>
    <scope>FUNCTION</scope>
    <scope>SUBCELLULAR LOCATION</scope>
    <scope>REGULATION BY VIRB</scope>
    <source>
        <strain>YSH6000 / Serotype 2a</strain>
        <plasmid>pMYSH6000</plasmid>
    </source>
</reference>
<reference key="2">
    <citation type="journal article" date="1998" name="EMBO J.">
        <title>Induction of type III secretion in Shigella flexneri is associated with differential control of transcription of genes encoding secreted proteins.</title>
        <authorList>
            <person name="Demers B."/>
            <person name="Sansonetti P.J."/>
            <person name="Parsot C."/>
        </authorList>
    </citation>
    <scope>NUCLEOTIDE SEQUENCE [GENOMIC DNA]</scope>
    <scope>PROTEIN SEQUENCE OF 1-10; 40-53 AND 134-144</scope>
    <scope>TRANSCRIPTIONAL REGULATION</scope>
    <source>
        <strain>M90T / Serotype 5a</strain>
        <plasmid>pWR100</plasmid>
    </source>
</reference>
<reference key="3">
    <citation type="journal article" date="2000" name="Mol. Microbiol.">
        <title>The virulence plasmid pWR100 and the repertoire of proteins secreted by the type III secretion apparatus of Shigella flexneri.</title>
        <authorList>
            <person name="Buchrieser C."/>
            <person name="Glaser P."/>
            <person name="Rusniok C."/>
            <person name="Nedjari H."/>
            <person name="d'Hauteville H."/>
            <person name="Kunst F."/>
            <person name="Sansonetti P.J."/>
            <person name="Parsot C."/>
        </authorList>
    </citation>
    <scope>NUCLEOTIDE SEQUENCE [GENOMIC DNA]</scope>
    <scope>PROTEIN SEQUENCE OF 1-10</scope>
    <scope>SUBCELLULAR LOCATION</scope>
    <source>
        <strain>M90T / Serotype 5a</strain>
        <plasmid>pWR100</plasmid>
    </source>
</reference>
<reference key="4">
    <citation type="journal article" date="2001" name="Infect. Immun.">
        <title>Complete DNA sequence and analysis of the large virulence plasmid of Shigella flexneri.</title>
        <authorList>
            <person name="Venkatesan M.M."/>
            <person name="Goldberg M.B."/>
            <person name="Rose D.J."/>
            <person name="Grotbeck E.J."/>
            <person name="Burland V."/>
            <person name="Blattner F.R."/>
        </authorList>
    </citation>
    <scope>NUCLEOTIDE SEQUENCE [GENOMIC DNA]</scope>
    <source>
        <strain>M90T / Serotype 5a</strain>
        <plasmid>pWR501</plasmid>
    </source>
</reference>
<reference key="5">
    <citation type="journal article" date="2003" name="Infect. Immun.">
        <title>Comparison of two major forms of the Shigella virulence plasmid pINV: positive selection is a major force driving the divergence.</title>
        <authorList>
            <person name="Lan R."/>
            <person name="Stevenson G."/>
            <person name="Reeves P.R."/>
        </authorList>
    </citation>
    <scope>NUCLEOTIDE SEQUENCE [GENOMIC DNA]</scope>
    <source>
        <strain>M1382 / Serotype 6</strain>
        <plasmid>pINV_F6_M1382</plasmid>
    </source>
</reference>
<reference key="6">
    <citation type="journal article" date="2002" name="Nucleic Acids Res.">
        <title>Genome sequence of Shigella flexneri 2a: insights into pathogenicity through comparison with genomes of Escherichia coli K12 and O157.</title>
        <authorList>
            <person name="Jin Q."/>
            <person name="Yuan Z."/>
            <person name="Xu J."/>
            <person name="Wang Y."/>
            <person name="Shen Y."/>
            <person name="Lu W."/>
            <person name="Wang J."/>
            <person name="Liu H."/>
            <person name="Yang J."/>
            <person name="Yang F."/>
            <person name="Zhang X."/>
            <person name="Zhang J."/>
            <person name="Yang G."/>
            <person name="Wu H."/>
            <person name="Qu D."/>
            <person name="Dong J."/>
            <person name="Sun L."/>
            <person name="Xue Y."/>
            <person name="Zhao A."/>
            <person name="Gao Y."/>
            <person name="Zhu J."/>
            <person name="Kan B."/>
            <person name="Ding K."/>
            <person name="Chen S."/>
            <person name="Cheng H."/>
            <person name="Yao Z."/>
            <person name="He B."/>
            <person name="Chen R."/>
            <person name="Ma D."/>
            <person name="Qiang B."/>
            <person name="Wen Y."/>
            <person name="Hou Y."/>
            <person name="Yu J."/>
        </authorList>
    </citation>
    <scope>NUCLEOTIDE SEQUENCE [LARGE SCALE GENOMIC DNA]</scope>
    <source>
        <strain>301 / Serotype 2a</strain>
        <plasmid>pCP301</plasmid>
    </source>
</reference>
<reference key="7">
    <citation type="journal article" date="2002" name="Mol. Microbiol.">
        <title>Regulation of transcription by the activity of the Shigella flexneri type III secretion apparatus.</title>
        <authorList>
            <person name="Mavris M."/>
            <person name="Page A.-L."/>
            <person name="Tournebize R."/>
            <person name="Demers B."/>
            <person name="Sansonetti P.J."/>
            <person name="Parsot C."/>
        </authorList>
    </citation>
    <scope>TRANSCRIPTIONAL INDUCTION BY MXIE AND IPGC</scope>
    <source>
        <strain>M90T / Serotype 5a</strain>
        <plasmid>pWR100</plasmid>
    </source>
</reference>
<reference key="8">
    <citation type="journal article" date="2002" name="EMBO J.">
        <title>Shigella deliver an effector protein to trigger host microtubule destabilization, which promotes Rac1 activity and efficient bacterial internalization.</title>
        <authorList>
            <person name="Yoshida S."/>
            <person name="Katayama E."/>
            <person name="Kuwae A."/>
            <person name="Mimuro H."/>
            <person name="Suzuki T."/>
            <person name="Sasakawa C."/>
        </authorList>
    </citation>
    <scope>FUNCTION</scope>
    <scope>TUBULIN BINDING</scope>
    <scope>SUBUNIT</scope>
    <source>
        <strain>YSH6000 / Serotype 2a</strain>
        <plasmid>pMYSH6000</plasmid>
    </source>
</reference>
<reference key="9">
    <citation type="journal article" date="2002" name="J. Bacteriol.">
        <title>MxiE regulates intracellular expression of factors secreted by the Shigella flexneri 2a type III secretion system.</title>
        <authorList>
            <person name="Kane C.D."/>
            <person name="Schuch R."/>
            <person name="Day W.A. Jr."/>
            <person name="Maurelli A.T."/>
        </authorList>
    </citation>
    <scope>REGULATION BY MXIE</scope>
    <scope>INDUCTION</scope>
    <source>
        <strain>ATCC 700930 / 2457T / Serotype 2a</strain>
        <plasmid>pWR100</plasmid>
    </source>
</reference>
<reference key="10">
    <citation type="journal article" date="2002" name="J. Bacteriol.">
        <title>Identification of the cis-acting site involved in activation of promoters regulated by activity of the type III secretion apparatus in Shigella flexneri.</title>
        <authorList>
            <person name="Mavris M."/>
            <person name="Sansonetti P.J."/>
            <person name="Parsot C."/>
        </authorList>
    </citation>
    <scope>REGULATION BY MXIE AND IPGC</scope>
    <source>
        <strain>M90T / Serotype 5a</strain>
        <plasmid>pWR100</plasmid>
    </source>
</reference>
<reference key="11">
    <citation type="journal article" date="2005" name="Microbiology">
        <title>Analysis of virulence plasmid gene expression defines three classes of effectors in the type III secretion system of Shigella flexneri.</title>
        <authorList>
            <person name="Le Gall T."/>
            <person name="Mavris M."/>
            <person name="Martino M.C."/>
            <person name="Bernardini M.L."/>
            <person name="Denamur E."/>
            <person name="Parsot C."/>
        </authorList>
    </citation>
    <scope>REGULATION BY MXIE AND VIRB</scope>
    <scope>INDUCTION</scope>
    <source>
        <strain>M90T / Serotype 5a</strain>
        <plasmid>pWR100</plasmid>
    </source>
</reference>
<reference key="12">
    <citation type="journal article" date="2006" name="Science">
        <title>Microtubule-severing activity of Shigella is pivotal for intercellular spreading.</title>
        <authorList>
            <person name="Yoshida S."/>
            <person name="Handa Y."/>
            <person name="Suzuki T."/>
            <person name="Ogawa M."/>
            <person name="Suzuki M."/>
            <person name="Tamai A."/>
            <person name="Abe A."/>
            <person name="Katayama E."/>
            <person name="Sasakawa C."/>
        </authorList>
    </citation>
    <scope>FUNCTION</scope>
    <scope>CYSTEINE PROTEASE ACTIVITY</scope>
    <scope>ACTIVITY REGULATION</scope>
    <scope>MUTAGENESIS OF CYS-34</scope>
    <source>
        <strain>YSH6000 / Serotype 2a</strain>
        <plasmid>pMYSH6000</plasmid>
    </source>
</reference>
<gene>
    <name type="primary">virA</name>
    <name type="ordered locus">CP0181</name>
    <name type="ORF">pWR501_0191</name>
</gene>
<protein>
    <recommendedName>
        <fullName>Cysteine protease-like VirA</fullName>
        <ecNumber>3.4.22.-</ecNumber>
    </recommendedName>
    <alternativeName>
        <fullName>Effector protein VirA</fullName>
    </alternativeName>
</protein>
<sequence>MQTSNITNHERNDSSWMSTVKSTTEVSWNKLSFCDILLKIITFGIYSPHETLAEKHSEKKLMDSFSPSLSQDKMDGEFAHANIDGISIRLCLNKGICSVFYLDGDKIQSTQLSSKEYNNLLSSLPPKQFNLGKVHTITAPVSGNFKTHKPAPEVIETAINCCTSIIPNDDYFHVKDTDFNSVWHDIYRDIRASDSNSTKIYFNNIEIPLKLIADLINELGINEFIDSKKELQMLSYNQVNKIINSNFPQQDLCFQTEKLLFTSLFQDPAFISALTSAFWQSLHITSSSVEHIYAQIMSENIENRLNFMPEQRVINNCGHIIKINAVVPKNDTAISASGGRAYEVSSSILPSHITCNGVGINKIETSYLVHAGTLPSSEGLRNAIPPESRQVSFAIISPDV</sequence>
<evidence type="ECO:0000255" key="1"/>
<evidence type="ECO:0000269" key="2">
    <source>
    </source>
</evidence>
<evidence type="ECO:0000269" key="3">
    <source>
    </source>
</evidence>
<evidence type="ECO:0000269" key="4">
    <source>
    </source>
</evidence>
<evidence type="ECO:0000269" key="5">
    <source>
    </source>
</evidence>
<evidence type="ECO:0000269" key="6">
    <source>
    </source>
</evidence>
<evidence type="ECO:0000269" key="7">
    <source>
    </source>
</evidence>
<evidence type="ECO:0000269" key="8">
    <source>
    </source>
</evidence>
<evidence type="ECO:0000305" key="9"/>
<evidence type="ECO:0007829" key="10">
    <source>
        <dbReference type="PDB" id="3EB8"/>
    </source>
</evidence>
<evidence type="ECO:0007829" key="11">
    <source>
        <dbReference type="PDB" id="3EE1"/>
    </source>
</evidence>
<evidence type="ECO:0007829" key="12">
    <source>
        <dbReference type="PDB" id="4FMB"/>
    </source>
</evidence>
<name>VIRA_SHIFL</name>
<feature type="chain" id="PRO_0000297842" description="Cysteine protease-like VirA">
    <location>
        <begin position="1"/>
        <end position="400"/>
    </location>
</feature>
<feature type="region of interest" description="Tubulin-binding domain">
    <location>
        <begin position="224"/>
        <end position="315"/>
    </location>
</feature>
<feature type="active site" evidence="1">
    <location>
        <position position="34"/>
    </location>
</feature>
<feature type="sequence variant" description="In plasmid pINV_F6_M1382.">
    <original>I</original>
    <variation>V</variation>
    <location>
        <position position="36"/>
    </location>
</feature>
<feature type="sequence variant" description="In plasmid pINV_F6_M1382.">
    <original>H</original>
    <variation>Y</variation>
    <location>
        <position position="56"/>
    </location>
</feature>
<feature type="sequence variant" description="In plasmid pINV_F6_M1382.">
    <original>H</original>
    <variation>P</variation>
    <location>
        <position position="173"/>
    </location>
</feature>
<feature type="sequence variant" description="In plasmid pINV_F6_M1382.">
    <original>V</original>
    <variation>L</variation>
    <location>
        <position position="239"/>
    </location>
</feature>
<feature type="mutagenesis site" description="Decreases alpha-tubulin degradation, bacterial motility, and virulence." evidence="6">
    <original>C</original>
    <variation>S</variation>
    <location>
        <position position="34"/>
    </location>
</feature>
<feature type="sequence conflict" description="In Ref. 3; AA sequence." evidence="9" ref="3">
    <location>
        <position position="8"/>
    </location>
</feature>
<feature type="helix" evidence="10">
    <location>
        <begin position="54"/>
        <end position="63"/>
    </location>
</feature>
<feature type="strand" evidence="11">
    <location>
        <begin position="65"/>
        <end position="67"/>
    </location>
</feature>
<feature type="strand" evidence="10">
    <location>
        <begin position="77"/>
        <end position="83"/>
    </location>
</feature>
<feature type="strand" evidence="10">
    <location>
        <begin position="86"/>
        <end position="93"/>
    </location>
</feature>
<feature type="strand" evidence="10">
    <location>
        <begin position="96"/>
        <end position="103"/>
    </location>
</feature>
<feature type="strand" evidence="11">
    <location>
        <begin position="104"/>
        <end position="106"/>
    </location>
</feature>
<feature type="strand" evidence="10">
    <location>
        <begin position="108"/>
        <end position="111"/>
    </location>
</feature>
<feature type="helix" evidence="10">
    <location>
        <begin position="114"/>
        <end position="123"/>
    </location>
</feature>
<feature type="strand" evidence="12">
    <location>
        <begin position="126"/>
        <end position="129"/>
    </location>
</feature>
<feature type="strand" evidence="10">
    <location>
        <begin position="136"/>
        <end position="142"/>
    </location>
</feature>
<feature type="helix" evidence="10">
    <location>
        <begin position="152"/>
        <end position="160"/>
    </location>
</feature>
<feature type="strand" evidence="10">
    <location>
        <begin position="163"/>
        <end position="165"/>
    </location>
</feature>
<feature type="strand" evidence="10">
    <location>
        <begin position="169"/>
        <end position="171"/>
    </location>
</feature>
<feature type="turn" evidence="10">
    <location>
        <begin position="176"/>
        <end position="181"/>
    </location>
</feature>
<feature type="helix" evidence="10">
    <location>
        <begin position="182"/>
        <end position="191"/>
    </location>
</feature>
<feature type="helix" evidence="10">
    <location>
        <begin position="193"/>
        <end position="195"/>
    </location>
</feature>
<feature type="strand" evidence="10">
    <location>
        <begin position="199"/>
        <end position="202"/>
    </location>
</feature>
<feature type="strand" evidence="11">
    <location>
        <begin position="205"/>
        <end position="207"/>
    </location>
</feature>
<feature type="helix" evidence="10">
    <location>
        <begin position="209"/>
        <end position="218"/>
    </location>
</feature>
<feature type="strand" evidence="11">
    <location>
        <begin position="222"/>
        <end position="224"/>
    </location>
</feature>
<feature type="helix" evidence="10">
    <location>
        <begin position="236"/>
        <end position="246"/>
    </location>
</feature>
<feature type="helix" evidence="10">
    <location>
        <begin position="252"/>
        <end position="263"/>
    </location>
</feature>
<feature type="helix" evidence="10">
    <location>
        <begin position="268"/>
        <end position="276"/>
    </location>
</feature>
<feature type="turn" evidence="10">
    <location>
        <begin position="280"/>
        <end position="283"/>
    </location>
</feature>
<feature type="helix" evidence="10">
    <location>
        <begin position="287"/>
        <end position="307"/>
    </location>
</feature>
<feature type="strand" evidence="10">
    <location>
        <begin position="315"/>
        <end position="325"/>
    </location>
</feature>
<feature type="strand" evidence="10">
    <location>
        <begin position="342"/>
        <end position="354"/>
    </location>
</feature>
<feature type="strand" evidence="10">
    <location>
        <begin position="357"/>
        <end position="369"/>
    </location>
</feature>
<feature type="helix" evidence="10">
    <location>
        <begin position="377"/>
        <end position="383"/>
    </location>
</feature>
<feature type="helix" evidence="10">
    <location>
        <begin position="386"/>
        <end position="388"/>
    </location>
</feature>
<feature type="strand" evidence="10">
    <location>
        <begin position="390"/>
        <end position="399"/>
    </location>
</feature>
<geneLocation type="plasmid">
    <name>pWR100</name>
</geneLocation>
<geneLocation type="plasmid">
    <name>pWR501</name>
</geneLocation>
<geneLocation type="plasmid">
    <name>pCP301</name>
</geneLocation>
<geneLocation type="plasmid">
    <name>pMYSH6000</name>
</geneLocation>
<geneLocation type="plasmid">
    <name>pINV_F6_M1382</name>
</geneLocation>